<keyword id="KW-0903">Direct protein sequencing</keyword>
<keyword id="KW-0256">Endoplasmic reticulum</keyword>
<keyword id="KW-0407">Ion channel</keyword>
<keyword id="KW-0406">Ion transport</keyword>
<keyword id="KW-0472">Membrane</keyword>
<keyword id="KW-0539">Nucleus</keyword>
<keyword id="KW-1185">Reference proteome</keyword>
<keyword id="KW-0703">Sarcoplasmic reticulum</keyword>
<keyword id="KW-0732">Signal</keyword>
<keyword id="KW-0812">Transmembrane</keyword>
<keyword id="KW-1133">Transmembrane helix</keyword>
<keyword id="KW-0813">Transport</keyword>
<keyword id="KW-0851">Voltage-gated channel</keyword>
<evidence type="ECO:0000250" key="1">
    <source>
        <dbReference type="UniProtKB" id="O77751"/>
    </source>
</evidence>
<evidence type="ECO:0000250" key="2">
    <source>
        <dbReference type="UniProtKB" id="Q9BVC6"/>
    </source>
</evidence>
<evidence type="ECO:0000255" key="3"/>
<evidence type="ECO:0000269" key="4">
    <source>
    </source>
</evidence>
<evidence type="ECO:0000303" key="5">
    <source>
    </source>
</evidence>
<evidence type="ECO:0000305" key="6"/>
<evidence type="ECO:0000312" key="7">
    <source>
        <dbReference type="MGI" id="MGI:1915789"/>
    </source>
</evidence>
<accession>Q3UBX0</accession>
<accession>Q8R006</accession>
<feature type="signal peptide" evidence="3">
    <location>
        <begin position="1"/>
        <end position="33"/>
    </location>
</feature>
<feature type="chain" id="PRO_0000044619" description="Voltage-gated monoatomic cation channel TMEM109">
    <location>
        <begin position="34"/>
        <end position="243"/>
    </location>
</feature>
<feature type="topological domain" description="Lumenal" evidence="1">
    <location>
        <begin position="34"/>
        <end position="83"/>
    </location>
</feature>
<feature type="transmembrane region" description="Helical" evidence="3">
    <location>
        <begin position="84"/>
        <end position="104"/>
    </location>
</feature>
<feature type="topological domain" description="Cytoplasmic" evidence="1">
    <location>
        <begin position="105"/>
        <end position="135"/>
    </location>
</feature>
<feature type="transmembrane region" description="Helical" evidence="3">
    <location>
        <begin position="136"/>
        <end position="156"/>
    </location>
</feature>
<feature type="topological domain" description="Lumenal" evidence="1">
    <location>
        <begin position="157"/>
        <end position="185"/>
    </location>
</feature>
<feature type="transmembrane region" description="Helical" evidence="3">
    <location>
        <begin position="186"/>
        <end position="205"/>
    </location>
</feature>
<feature type="topological domain" description="Cytoplasmic" evidence="1">
    <location>
        <begin position="206"/>
        <end position="243"/>
    </location>
</feature>
<feature type="sequence conflict" description="In Ref. 1; BAE29844." evidence="6" ref="1">
    <original>I</original>
    <variation>V</variation>
    <location>
        <position position="159"/>
    </location>
</feature>
<sequence>MAGAHSTPLWSRHLLKAVLMVLVALFLVHSASAQSHREFASPGQQKKETSADILTQIGRSLKEMLDTWLGPETMHVISETLLQVMWAISSAISVACFALSGIAAQLLSALGLDGEQLTQGLKLSPSQVQTLLLWGAAALVIYWLLSLLLGLVLALLGRILGGLKLVLFVAGFVALVRSVPDPSTRALMLLALLTLFALLSRLTGSRSSGSHLEAKVRGLERQIEELRGRQRRAAKMPRSMEEE</sequence>
<proteinExistence type="evidence at protein level"/>
<reference key="1">
    <citation type="journal article" date="2005" name="Science">
        <title>The transcriptional landscape of the mammalian genome.</title>
        <authorList>
            <person name="Carninci P."/>
            <person name="Kasukawa T."/>
            <person name="Katayama S."/>
            <person name="Gough J."/>
            <person name="Frith M.C."/>
            <person name="Maeda N."/>
            <person name="Oyama R."/>
            <person name="Ravasi T."/>
            <person name="Lenhard B."/>
            <person name="Wells C."/>
            <person name="Kodzius R."/>
            <person name="Shimokawa K."/>
            <person name="Bajic V.B."/>
            <person name="Brenner S.E."/>
            <person name="Batalov S."/>
            <person name="Forrest A.R."/>
            <person name="Zavolan M."/>
            <person name="Davis M.J."/>
            <person name="Wilming L.G."/>
            <person name="Aidinis V."/>
            <person name="Allen J.E."/>
            <person name="Ambesi-Impiombato A."/>
            <person name="Apweiler R."/>
            <person name="Aturaliya R.N."/>
            <person name="Bailey T.L."/>
            <person name="Bansal M."/>
            <person name="Baxter L."/>
            <person name="Beisel K.W."/>
            <person name="Bersano T."/>
            <person name="Bono H."/>
            <person name="Chalk A.M."/>
            <person name="Chiu K.P."/>
            <person name="Choudhary V."/>
            <person name="Christoffels A."/>
            <person name="Clutterbuck D.R."/>
            <person name="Crowe M.L."/>
            <person name="Dalla E."/>
            <person name="Dalrymple B.P."/>
            <person name="de Bono B."/>
            <person name="Della Gatta G."/>
            <person name="di Bernardo D."/>
            <person name="Down T."/>
            <person name="Engstrom P."/>
            <person name="Fagiolini M."/>
            <person name="Faulkner G."/>
            <person name="Fletcher C.F."/>
            <person name="Fukushima T."/>
            <person name="Furuno M."/>
            <person name="Futaki S."/>
            <person name="Gariboldi M."/>
            <person name="Georgii-Hemming P."/>
            <person name="Gingeras T.R."/>
            <person name="Gojobori T."/>
            <person name="Green R.E."/>
            <person name="Gustincich S."/>
            <person name="Harbers M."/>
            <person name="Hayashi Y."/>
            <person name="Hensch T.K."/>
            <person name="Hirokawa N."/>
            <person name="Hill D."/>
            <person name="Huminiecki L."/>
            <person name="Iacono M."/>
            <person name="Ikeo K."/>
            <person name="Iwama A."/>
            <person name="Ishikawa T."/>
            <person name="Jakt M."/>
            <person name="Kanapin A."/>
            <person name="Katoh M."/>
            <person name="Kawasawa Y."/>
            <person name="Kelso J."/>
            <person name="Kitamura H."/>
            <person name="Kitano H."/>
            <person name="Kollias G."/>
            <person name="Krishnan S.P."/>
            <person name="Kruger A."/>
            <person name="Kummerfeld S.K."/>
            <person name="Kurochkin I.V."/>
            <person name="Lareau L.F."/>
            <person name="Lazarevic D."/>
            <person name="Lipovich L."/>
            <person name="Liu J."/>
            <person name="Liuni S."/>
            <person name="McWilliam S."/>
            <person name="Madan Babu M."/>
            <person name="Madera M."/>
            <person name="Marchionni L."/>
            <person name="Matsuda H."/>
            <person name="Matsuzawa S."/>
            <person name="Miki H."/>
            <person name="Mignone F."/>
            <person name="Miyake S."/>
            <person name="Morris K."/>
            <person name="Mottagui-Tabar S."/>
            <person name="Mulder N."/>
            <person name="Nakano N."/>
            <person name="Nakauchi H."/>
            <person name="Ng P."/>
            <person name="Nilsson R."/>
            <person name="Nishiguchi S."/>
            <person name="Nishikawa S."/>
            <person name="Nori F."/>
            <person name="Ohara O."/>
            <person name="Okazaki Y."/>
            <person name="Orlando V."/>
            <person name="Pang K.C."/>
            <person name="Pavan W.J."/>
            <person name="Pavesi G."/>
            <person name="Pesole G."/>
            <person name="Petrovsky N."/>
            <person name="Piazza S."/>
            <person name="Reed J."/>
            <person name="Reid J.F."/>
            <person name="Ring B.Z."/>
            <person name="Ringwald M."/>
            <person name="Rost B."/>
            <person name="Ruan Y."/>
            <person name="Salzberg S.L."/>
            <person name="Sandelin A."/>
            <person name="Schneider C."/>
            <person name="Schoenbach C."/>
            <person name="Sekiguchi K."/>
            <person name="Semple C.A."/>
            <person name="Seno S."/>
            <person name="Sessa L."/>
            <person name="Sheng Y."/>
            <person name="Shibata Y."/>
            <person name="Shimada H."/>
            <person name="Shimada K."/>
            <person name="Silva D."/>
            <person name="Sinclair B."/>
            <person name="Sperling S."/>
            <person name="Stupka E."/>
            <person name="Sugiura K."/>
            <person name="Sultana R."/>
            <person name="Takenaka Y."/>
            <person name="Taki K."/>
            <person name="Tammoja K."/>
            <person name="Tan S.L."/>
            <person name="Tang S."/>
            <person name="Taylor M.S."/>
            <person name="Tegner J."/>
            <person name="Teichmann S.A."/>
            <person name="Ueda H.R."/>
            <person name="van Nimwegen E."/>
            <person name="Verardo R."/>
            <person name="Wei C.L."/>
            <person name="Yagi K."/>
            <person name="Yamanishi H."/>
            <person name="Zabarovsky E."/>
            <person name="Zhu S."/>
            <person name="Zimmer A."/>
            <person name="Hide W."/>
            <person name="Bult C."/>
            <person name="Grimmond S.M."/>
            <person name="Teasdale R.D."/>
            <person name="Liu E.T."/>
            <person name="Brusic V."/>
            <person name="Quackenbush J."/>
            <person name="Wahlestedt C."/>
            <person name="Mattick J.S."/>
            <person name="Hume D.A."/>
            <person name="Kai C."/>
            <person name="Sasaki D."/>
            <person name="Tomaru Y."/>
            <person name="Fukuda S."/>
            <person name="Kanamori-Katayama M."/>
            <person name="Suzuki M."/>
            <person name="Aoki J."/>
            <person name="Arakawa T."/>
            <person name="Iida J."/>
            <person name="Imamura K."/>
            <person name="Itoh M."/>
            <person name="Kato T."/>
            <person name="Kawaji H."/>
            <person name="Kawagashira N."/>
            <person name="Kawashima T."/>
            <person name="Kojima M."/>
            <person name="Kondo S."/>
            <person name="Konno H."/>
            <person name="Nakano K."/>
            <person name="Ninomiya N."/>
            <person name="Nishio T."/>
            <person name="Okada M."/>
            <person name="Plessy C."/>
            <person name="Shibata K."/>
            <person name="Shiraki T."/>
            <person name="Suzuki S."/>
            <person name="Tagami M."/>
            <person name="Waki K."/>
            <person name="Watahiki A."/>
            <person name="Okamura-Oho Y."/>
            <person name="Suzuki H."/>
            <person name="Kawai J."/>
            <person name="Hayashizaki Y."/>
        </authorList>
    </citation>
    <scope>NUCLEOTIDE SEQUENCE [LARGE SCALE MRNA]</scope>
    <source>
        <strain>C57BL/6J</strain>
        <tissue>Lung</tissue>
        <tissue>Macrophage</tissue>
    </source>
</reference>
<reference key="2">
    <citation type="journal article" date="2004" name="Genome Res.">
        <title>The status, quality, and expansion of the NIH full-length cDNA project: the Mammalian Gene Collection (MGC).</title>
        <authorList>
            <consortium name="The MGC Project Team"/>
        </authorList>
    </citation>
    <scope>NUCLEOTIDE SEQUENCE [LARGE SCALE MRNA]</scope>
    <source>
        <strain>FVB/N</strain>
        <tissue>Liver</tissue>
        <tissue>Mammary tumor</tissue>
        <tissue>Retina</tissue>
    </source>
</reference>
<reference key="3">
    <citation type="submission" date="2007-04" db="UniProtKB">
        <authorList>
            <person name="Lubec G."/>
            <person name="Kang S.U."/>
        </authorList>
    </citation>
    <scope>PROTEIN SEQUENCE OF 38-46 AND 48-59</scope>
    <scope>IDENTIFICATION BY MASS SPECTROMETRY</scope>
    <source>
        <strain>C57BL/6J</strain>
        <tissue>Brain</tissue>
    </source>
</reference>
<reference key="4">
    <citation type="journal article" date="2010" name="Biochem. Biophys. Res. Commun.">
        <title>Facilitation of DNA damage-induced apoptosis by endoplasmic reticulum protein mitsugumin23.</title>
        <authorList>
            <person name="Yamazaki T."/>
            <person name="Sasaki N."/>
            <person name="Nishi M."/>
            <person name="Takeshima H."/>
        </authorList>
    </citation>
    <scope>FUNCTION</scope>
    <scope>DISRUPTION PHENOTYPE</scope>
</reference>
<reference key="5">
    <citation type="journal article" date="2010" name="Cell">
        <title>A tissue-specific atlas of mouse protein phosphorylation and expression.</title>
        <authorList>
            <person name="Huttlin E.L."/>
            <person name="Jedrychowski M.P."/>
            <person name="Elias J.E."/>
            <person name="Goswami T."/>
            <person name="Rad R."/>
            <person name="Beausoleil S.A."/>
            <person name="Villen J."/>
            <person name="Haas W."/>
            <person name="Sowa M.E."/>
            <person name="Gygi S.P."/>
        </authorList>
    </citation>
    <scope>IDENTIFICATION BY MASS SPECTROMETRY [LARGE SCALE ANALYSIS]</scope>
    <source>
        <tissue>Brain</tissue>
        <tissue>Brown adipose tissue</tissue>
        <tissue>Heart</tissue>
        <tissue>Kidney</tissue>
        <tissue>Liver</tissue>
        <tissue>Lung</tissue>
        <tissue>Pancreas</tissue>
        <tissue>Spleen</tissue>
        <tissue>Testis</tissue>
    </source>
</reference>
<name>TM109_MOUSE</name>
<organism>
    <name type="scientific">Mus musculus</name>
    <name type="common">Mouse</name>
    <dbReference type="NCBI Taxonomy" id="10090"/>
    <lineage>
        <taxon>Eukaryota</taxon>
        <taxon>Metazoa</taxon>
        <taxon>Chordata</taxon>
        <taxon>Craniata</taxon>
        <taxon>Vertebrata</taxon>
        <taxon>Euteleostomi</taxon>
        <taxon>Mammalia</taxon>
        <taxon>Eutheria</taxon>
        <taxon>Euarchontoglires</taxon>
        <taxon>Glires</taxon>
        <taxon>Rodentia</taxon>
        <taxon>Myomorpha</taxon>
        <taxon>Muroidea</taxon>
        <taxon>Muridae</taxon>
        <taxon>Murinae</taxon>
        <taxon>Mus</taxon>
        <taxon>Mus</taxon>
    </lineage>
</organism>
<dbReference type="EMBL" id="AK150779">
    <property type="protein sequence ID" value="BAE29844.1"/>
    <property type="molecule type" value="mRNA"/>
</dbReference>
<dbReference type="EMBL" id="AK151850">
    <property type="protein sequence ID" value="BAE30740.1"/>
    <property type="molecule type" value="mRNA"/>
</dbReference>
<dbReference type="EMBL" id="AK152419">
    <property type="protein sequence ID" value="BAE31204.1"/>
    <property type="molecule type" value="mRNA"/>
</dbReference>
<dbReference type="EMBL" id="AK165990">
    <property type="protein sequence ID" value="BAE38505.1"/>
    <property type="molecule type" value="mRNA"/>
</dbReference>
<dbReference type="EMBL" id="BC022997">
    <property type="protein sequence ID" value="AAH22997.1"/>
    <property type="molecule type" value="mRNA"/>
</dbReference>
<dbReference type="EMBL" id="BC023901">
    <property type="protein sequence ID" value="AAH23901.1"/>
    <property type="molecule type" value="mRNA"/>
</dbReference>
<dbReference type="EMBL" id="BC025033">
    <property type="protein sequence ID" value="AAH25033.1"/>
    <property type="molecule type" value="mRNA"/>
</dbReference>
<dbReference type="EMBL" id="BC025815">
    <property type="protein sequence ID" value="AAH25815.1"/>
    <property type="molecule type" value="mRNA"/>
</dbReference>
<dbReference type="CCDS" id="CCDS29590.1"/>
<dbReference type="RefSeq" id="NP_598903.1">
    <property type="nucleotide sequence ID" value="NM_134142.1"/>
</dbReference>
<dbReference type="RefSeq" id="XP_006527380.1">
    <property type="nucleotide sequence ID" value="XM_006527317.1"/>
</dbReference>
<dbReference type="BioGRID" id="212917">
    <property type="interactions" value="17"/>
</dbReference>
<dbReference type="FunCoup" id="Q3UBX0">
    <property type="interactions" value="473"/>
</dbReference>
<dbReference type="IntAct" id="Q3UBX0">
    <property type="interactions" value="16"/>
</dbReference>
<dbReference type="MINT" id="Q3UBX0"/>
<dbReference type="STRING" id="10090.ENSMUSP00000039529"/>
<dbReference type="TCDB" id="1.A.74.1.1">
    <property type="family name" value="the mitsugumin 23 (mg23) family"/>
</dbReference>
<dbReference type="GlyGen" id="Q3UBX0">
    <property type="glycosylation" value="1 site, 1 O-linked glycan (1 site)"/>
</dbReference>
<dbReference type="iPTMnet" id="Q3UBX0"/>
<dbReference type="PhosphoSitePlus" id="Q3UBX0"/>
<dbReference type="SwissPalm" id="Q3UBX0"/>
<dbReference type="jPOST" id="Q3UBX0"/>
<dbReference type="PaxDb" id="10090-ENSMUSP00000039529"/>
<dbReference type="PeptideAtlas" id="Q3UBX0"/>
<dbReference type="ProteomicsDB" id="259520"/>
<dbReference type="Pumba" id="Q3UBX0"/>
<dbReference type="Antibodypedia" id="2041">
    <property type="antibodies" value="70 antibodies from 16 providers"/>
</dbReference>
<dbReference type="Ensembl" id="ENSMUST00000038128.15">
    <property type="protein sequence ID" value="ENSMUSP00000039529.9"/>
    <property type="gene ID" value="ENSMUSG00000034659.15"/>
</dbReference>
<dbReference type="GeneID" id="68539"/>
<dbReference type="KEGG" id="mmu:68539"/>
<dbReference type="UCSC" id="uc008gre.2">
    <property type="organism name" value="mouse"/>
</dbReference>
<dbReference type="AGR" id="MGI:1915789"/>
<dbReference type="CTD" id="79073"/>
<dbReference type="MGI" id="MGI:1915789">
    <property type="gene designation" value="Tmem109"/>
</dbReference>
<dbReference type="VEuPathDB" id="HostDB:ENSMUSG00000034659"/>
<dbReference type="eggNOG" id="ENOG502S0EJ">
    <property type="taxonomic scope" value="Eukaryota"/>
</dbReference>
<dbReference type="GeneTree" id="ENSGT00390000015704"/>
<dbReference type="HOGENOM" id="CLU_099892_0_0_1"/>
<dbReference type="InParanoid" id="Q3UBX0"/>
<dbReference type="OMA" id="VFKVILM"/>
<dbReference type="OrthoDB" id="9902161at2759"/>
<dbReference type="PhylomeDB" id="Q3UBX0"/>
<dbReference type="TreeFam" id="TF332238"/>
<dbReference type="BioGRID-ORCS" id="68539">
    <property type="hits" value="1 hit in 77 CRISPR screens"/>
</dbReference>
<dbReference type="CD-CODE" id="CE726F99">
    <property type="entry name" value="Postsynaptic density"/>
</dbReference>
<dbReference type="ChiTaRS" id="Tmem109">
    <property type="organism name" value="mouse"/>
</dbReference>
<dbReference type="PRO" id="PR:Q3UBX0"/>
<dbReference type="Proteomes" id="UP000000589">
    <property type="component" value="Chromosome 19"/>
</dbReference>
<dbReference type="RNAct" id="Q3UBX0">
    <property type="molecule type" value="protein"/>
</dbReference>
<dbReference type="Bgee" id="ENSMUSG00000034659">
    <property type="expression patterns" value="Expressed in ascending aorta and 256 other cell types or tissues"/>
</dbReference>
<dbReference type="ExpressionAtlas" id="Q3UBX0">
    <property type="expression patterns" value="baseline and differential"/>
</dbReference>
<dbReference type="GO" id="GO:0005783">
    <property type="term" value="C:endoplasmic reticulum"/>
    <property type="evidence" value="ECO:0000266"/>
    <property type="project" value="MGI"/>
</dbReference>
<dbReference type="GO" id="GO:0034702">
    <property type="term" value="C:monoatomic ion channel complex"/>
    <property type="evidence" value="ECO:0007669"/>
    <property type="project" value="UniProtKB-KW"/>
</dbReference>
<dbReference type="GO" id="GO:0031965">
    <property type="term" value="C:nuclear membrane"/>
    <property type="evidence" value="ECO:0000266"/>
    <property type="project" value="MGI"/>
</dbReference>
<dbReference type="GO" id="GO:0005640">
    <property type="term" value="C:nuclear outer membrane"/>
    <property type="evidence" value="ECO:0007669"/>
    <property type="project" value="UniProtKB-SubCell"/>
</dbReference>
<dbReference type="GO" id="GO:0033017">
    <property type="term" value="C:sarcoplasmic reticulum membrane"/>
    <property type="evidence" value="ECO:0000250"/>
    <property type="project" value="UniProtKB"/>
</dbReference>
<dbReference type="GO" id="GO:0022843">
    <property type="term" value="F:voltage-gated monoatomic cation channel activity"/>
    <property type="evidence" value="ECO:0000250"/>
    <property type="project" value="UniProtKB"/>
</dbReference>
<dbReference type="GO" id="GO:0071480">
    <property type="term" value="P:cellular response to gamma radiation"/>
    <property type="evidence" value="ECO:0000266"/>
    <property type="project" value="MGI"/>
</dbReference>
<dbReference type="GO" id="GO:0042771">
    <property type="term" value="P:intrinsic apoptotic signaling pathway in response to DNA damage by p53 class mediator"/>
    <property type="evidence" value="ECO:0000315"/>
    <property type="project" value="MGI"/>
</dbReference>
<dbReference type="GO" id="GO:0043069">
    <property type="term" value="P:negative regulation of programmed cell death"/>
    <property type="evidence" value="ECO:0000266"/>
    <property type="project" value="MGI"/>
</dbReference>
<dbReference type="InterPro" id="IPR039492">
    <property type="entry name" value="TMEM109"/>
</dbReference>
<dbReference type="PANTHER" id="PTHR14550">
    <property type="entry name" value="TRANSMEMBRANE PROTEIN 109"/>
    <property type="match status" value="1"/>
</dbReference>
<dbReference type="PANTHER" id="PTHR14550:SF2">
    <property type="entry name" value="TRANSMEMBRANE PROTEIN 109"/>
    <property type="match status" value="1"/>
</dbReference>
<dbReference type="Pfam" id="PF14965">
    <property type="entry name" value="BRI3BP"/>
    <property type="match status" value="1"/>
</dbReference>
<protein>
    <recommendedName>
        <fullName evidence="1">Voltage-gated monoatomic cation channel TMEM109</fullName>
    </recommendedName>
    <alternativeName>
        <fullName evidence="5">Mitsugumin-23</fullName>
        <shortName evidence="5">Mg23</shortName>
    </alternativeName>
    <alternativeName>
        <fullName evidence="7">Transmembrane protein 109</fullName>
    </alternativeName>
</protein>
<comment type="function">
    <text evidence="1 4">Functions as a voltage-gated monoatomic cation channel permeable to both potassium and calcium (By similarity). Plays a role in the cellular response to DNA damage (PubMed:20060811).</text>
</comment>
<comment type="catalytic activity">
    <reaction evidence="1">
        <text>K(+)(in) = K(+)(out)</text>
        <dbReference type="Rhea" id="RHEA:29463"/>
        <dbReference type="ChEBI" id="CHEBI:29103"/>
    </reaction>
</comment>
<comment type="catalytic activity">
    <reaction evidence="1">
        <text>Ca(2+)(in) = Ca(2+)(out)</text>
        <dbReference type="Rhea" id="RHEA:29671"/>
        <dbReference type="ChEBI" id="CHEBI:29108"/>
    </reaction>
</comment>
<comment type="subunit">
    <text evidence="1 2">Homooligomer. Interacts with CRYAB; in the cellular response to DNA damage.</text>
</comment>
<comment type="interaction">
    <interactant intactId="EBI-2366300">
        <id>Q3UBX0</id>
    </interactant>
    <interactant intactId="EBI-739060">
        <id>P02511</id>
        <label>CRYAB</label>
    </interactant>
    <organismsDiffer>true</organismsDiffer>
    <experiments>2</experiments>
</comment>
<comment type="subcellular location">
    <subcellularLocation>
        <location evidence="1">Nucleus outer membrane</location>
        <topology evidence="1">Multi-pass membrane protein</topology>
    </subcellularLocation>
    <subcellularLocation>
        <location evidence="1">Endoplasmic reticulum membrane</location>
        <topology evidence="1">Multi-pass membrane protein</topology>
    </subcellularLocation>
    <subcellularLocation>
        <location evidence="1">Sarcoplasmic reticulum membrane</location>
        <topology evidence="1">Multi-pass membrane protein</topology>
    </subcellularLocation>
</comment>
<comment type="disruption phenotype">
    <text evidence="4">Viable and normal in appearance.</text>
</comment>
<gene>
    <name evidence="7" type="primary">Tmem109</name>
</gene>